<dbReference type="EC" id="5.3.1.1" evidence="1"/>
<dbReference type="EMBL" id="AM933173">
    <property type="protein sequence ID" value="CAR39133.1"/>
    <property type="molecule type" value="Genomic_DNA"/>
</dbReference>
<dbReference type="RefSeq" id="WP_001216335.1">
    <property type="nucleotide sequence ID" value="NC_011274.1"/>
</dbReference>
<dbReference type="SMR" id="B5RF90"/>
<dbReference type="KEGG" id="seg:SG3339"/>
<dbReference type="HOGENOM" id="CLU_024251_2_1_6"/>
<dbReference type="UniPathway" id="UPA00109">
    <property type="reaction ID" value="UER00189"/>
</dbReference>
<dbReference type="UniPathway" id="UPA00138"/>
<dbReference type="Proteomes" id="UP000008321">
    <property type="component" value="Chromosome"/>
</dbReference>
<dbReference type="GO" id="GO:0005829">
    <property type="term" value="C:cytosol"/>
    <property type="evidence" value="ECO:0007669"/>
    <property type="project" value="TreeGrafter"/>
</dbReference>
<dbReference type="GO" id="GO:0004807">
    <property type="term" value="F:triose-phosphate isomerase activity"/>
    <property type="evidence" value="ECO:0007669"/>
    <property type="project" value="UniProtKB-UniRule"/>
</dbReference>
<dbReference type="GO" id="GO:0006094">
    <property type="term" value="P:gluconeogenesis"/>
    <property type="evidence" value="ECO:0007669"/>
    <property type="project" value="UniProtKB-UniRule"/>
</dbReference>
<dbReference type="GO" id="GO:0046166">
    <property type="term" value="P:glyceraldehyde-3-phosphate biosynthetic process"/>
    <property type="evidence" value="ECO:0007669"/>
    <property type="project" value="TreeGrafter"/>
</dbReference>
<dbReference type="GO" id="GO:0019563">
    <property type="term" value="P:glycerol catabolic process"/>
    <property type="evidence" value="ECO:0007669"/>
    <property type="project" value="TreeGrafter"/>
</dbReference>
<dbReference type="GO" id="GO:0006096">
    <property type="term" value="P:glycolytic process"/>
    <property type="evidence" value="ECO:0007669"/>
    <property type="project" value="UniProtKB-UniRule"/>
</dbReference>
<dbReference type="CDD" id="cd00311">
    <property type="entry name" value="TIM"/>
    <property type="match status" value="1"/>
</dbReference>
<dbReference type="FunFam" id="3.20.20.70:FF:000020">
    <property type="entry name" value="Triosephosphate isomerase"/>
    <property type="match status" value="1"/>
</dbReference>
<dbReference type="Gene3D" id="3.20.20.70">
    <property type="entry name" value="Aldolase class I"/>
    <property type="match status" value="1"/>
</dbReference>
<dbReference type="HAMAP" id="MF_00147_B">
    <property type="entry name" value="TIM_B"/>
    <property type="match status" value="1"/>
</dbReference>
<dbReference type="InterPro" id="IPR013785">
    <property type="entry name" value="Aldolase_TIM"/>
</dbReference>
<dbReference type="InterPro" id="IPR035990">
    <property type="entry name" value="TIM_sf"/>
</dbReference>
<dbReference type="InterPro" id="IPR022896">
    <property type="entry name" value="TrioseP_Isoase_bac/euk"/>
</dbReference>
<dbReference type="InterPro" id="IPR000652">
    <property type="entry name" value="Triosephosphate_isomerase"/>
</dbReference>
<dbReference type="InterPro" id="IPR020861">
    <property type="entry name" value="Triosephosphate_isomerase_AS"/>
</dbReference>
<dbReference type="NCBIfam" id="TIGR00419">
    <property type="entry name" value="tim"/>
    <property type="match status" value="1"/>
</dbReference>
<dbReference type="PANTHER" id="PTHR21139">
    <property type="entry name" value="TRIOSEPHOSPHATE ISOMERASE"/>
    <property type="match status" value="1"/>
</dbReference>
<dbReference type="PANTHER" id="PTHR21139:SF42">
    <property type="entry name" value="TRIOSEPHOSPHATE ISOMERASE"/>
    <property type="match status" value="1"/>
</dbReference>
<dbReference type="Pfam" id="PF00121">
    <property type="entry name" value="TIM"/>
    <property type="match status" value="1"/>
</dbReference>
<dbReference type="SUPFAM" id="SSF51351">
    <property type="entry name" value="Triosephosphate isomerase (TIM)"/>
    <property type="match status" value="1"/>
</dbReference>
<dbReference type="PROSITE" id="PS00171">
    <property type="entry name" value="TIM_1"/>
    <property type="match status" value="1"/>
</dbReference>
<dbReference type="PROSITE" id="PS51440">
    <property type="entry name" value="TIM_2"/>
    <property type="match status" value="1"/>
</dbReference>
<feature type="chain" id="PRO_1000096528" description="Triosephosphate isomerase">
    <location>
        <begin position="1"/>
        <end position="255"/>
    </location>
</feature>
<feature type="active site" description="Electrophile" evidence="1">
    <location>
        <position position="95"/>
    </location>
</feature>
<feature type="active site" description="Proton acceptor" evidence="1">
    <location>
        <position position="167"/>
    </location>
</feature>
<feature type="binding site" evidence="1">
    <location>
        <begin position="9"/>
        <end position="11"/>
    </location>
    <ligand>
        <name>substrate</name>
    </ligand>
</feature>
<feature type="binding site" evidence="1">
    <location>
        <position position="173"/>
    </location>
    <ligand>
        <name>substrate</name>
    </ligand>
</feature>
<feature type="binding site" evidence="1">
    <location>
        <position position="212"/>
    </location>
    <ligand>
        <name>substrate</name>
    </ligand>
</feature>
<feature type="binding site" evidence="1">
    <location>
        <begin position="233"/>
        <end position="234"/>
    </location>
    <ligand>
        <name>substrate</name>
    </ligand>
</feature>
<sequence length="255" mass="26887">MRHPLVMGNWKLNGSRHMVNELVANLRKELAGVAGCDVAIAPPEMYIDLAKRAAAGSHIMLGAQNVDLNLSGAFTGETSAEMLKDIGAQYIIIGHSERRTYHKESDELIAKKFAVLKEQGLTPVLCIGETEAENEAGKTEEVCARQIDAVLKTQGAAAFEGAVIAYEPVWAIGTGKSATPAQAQAVHKFIRDHIAKADAKIAEQVIIQYGGSVNASNAAELFAQPDIDGALVGGASLKADAFAVIVKAAEAAKQA</sequence>
<keyword id="KW-0963">Cytoplasm</keyword>
<keyword id="KW-0312">Gluconeogenesis</keyword>
<keyword id="KW-0324">Glycolysis</keyword>
<keyword id="KW-0413">Isomerase</keyword>
<accession>B5RF90</accession>
<proteinExistence type="inferred from homology"/>
<protein>
    <recommendedName>
        <fullName evidence="1">Triosephosphate isomerase</fullName>
        <shortName evidence="1">TIM</shortName>
        <shortName evidence="1">TPI</shortName>
        <ecNumber evidence="1">5.3.1.1</ecNumber>
    </recommendedName>
    <alternativeName>
        <fullName evidence="1">Triose-phosphate isomerase</fullName>
    </alternativeName>
</protein>
<comment type="function">
    <text evidence="1">Involved in the gluconeogenesis. Catalyzes stereospecifically the conversion of dihydroxyacetone phosphate (DHAP) to D-glyceraldehyde-3-phosphate (G3P).</text>
</comment>
<comment type="catalytic activity">
    <reaction evidence="1">
        <text>D-glyceraldehyde 3-phosphate = dihydroxyacetone phosphate</text>
        <dbReference type="Rhea" id="RHEA:18585"/>
        <dbReference type="ChEBI" id="CHEBI:57642"/>
        <dbReference type="ChEBI" id="CHEBI:59776"/>
        <dbReference type="EC" id="5.3.1.1"/>
    </reaction>
</comment>
<comment type="pathway">
    <text evidence="1">Carbohydrate biosynthesis; gluconeogenesis.</text>
</comment>
<comment type="pathway">
    <text evidence="1">Carbohydrate degradation; glycolysis; D-glyceraldehyde 3-phosphate from glycerone phosphate: step 1/1.</text>
</comment>
<comment type="subunit">
    <text evidence="1">Homodimer.</text>
</comment>
<comment type="subcellular location">
    <subcellularLocation>
        <location evidence="1">Cytoplasm</location>
    </subcellularLocation>
</comment>
<comment type="similarity">
    <text evidence="1">Belongs to the triosephosphate isomerase family.</text>
</comment>
<evidence type="ECO:0000255" key="1">
    <source>
        <dbReference type="HAMAP-Rule" id="MF_00147"/>
    </source>
</evidence>
<gene>
    <name evidence="1" type="primary">tpiA</name>
    <name type="ordered locus">SG3339</name>
</gene>
<name>TPIS_SALG2</name>
<reference key="1">
    <citation type="journal article" date="2008" name="Genome Res.">
        <title>Comparative genome analysis of Salmonella enteritidis PT4 and Salmonella gallinarum 287/91 provides insights into evolutionary and host adaptation pathways.</title>
        <authorList>
            <person name="Thomson N.R."/>
            <person name="Clayton D.J."/>
            <person name="Windhorst D."/>
            <person name="Vernikos G."/>
            <person name="Davidson S."/>
            <person name="Churcher C."/>
            <person name="Quail M.A."/>
            <person name="Stevens M."/>
            <person name="Jones M.A."/>
            <person name="Watson M."/>
            <person name="Barron A."/>
            <person name="Layton A."/>
            <person name="Pickard D."/>
            <person name="Kingsley R.A."/>
            <person name="Bignell A."/>
            <person name="Clark L."/>
            <person name="Harris B."/>
            <person name="Ormond D."/>
            <person name="Abdellah Z."/>
            <person name="Brooks K."/>
            <person name="Cherevach I."/>
            <person name="Chillingworth T."/>
            <person name="Woodward J."/>
            <person name="Norberczak H."/>
            <person name="Lord A."/>
            <person name="Arrowsmith C."/>
            <person name="Jagels K."/>
            <person name="Moule S."/>
            <person name="Mungall K."/>
            <person name="Saunders M."/>
            <person name="Whitehead S."/>
            <person name="Chabalgoity J.A."/>
            <person name="Maskell D."/>
            <person name="Humphreys T."/>
            <person name="Roberts M."/>
            <person name="Barrow P.A."/>
            <person name="Dougan G."/>
            <person name="Parkhill J."/>
        </authorList>
    </citation>
    <scope>NUCLEOTIDE SEQUENCE [LARGE SCALE GENOMIC DNA]</scope>
    <source>
        <strain>287/91 / NCTC 13346</strain>
    </source>
</reference>
<organism>
    <name type="scientific">Salmonella gallinarum (strain 287/91 / NCTC 13346)</name>
    <dbReference type="NCBI Taxonomy" id="550538"/>
    <lineage>
        <taxon>Bacteria</taxon>
        <taxon>Pseudomonadati</taxon>
        <taxon>Pseudomonadota</taxon>
        <taxon>Gammaproteobacteria</taxon>
        <taxon>Enterobacterales</taxon>
        <taxon>Enterobacteriaceae</taxon>
        <taxon>Salmonella</taxon>
    </lineage>
</organism>